<gene>
    <name type="primary">CYP708A2</name>
    <name type="synonym">THAH</name>
    <name type="ordered locus">At5g48000</name>
    <name type="ORF">MDN11.7</name>
</gene>
<comment type="function">
    <text evidence="3">Hydroxylates thalianol into thalian-diol.</text>
</comment>
<comment type="cofactor">
    <cofactor evidence="1">
        <name>heme</name>
        <dbReference type="ChEBI" id="CHEBI:30413"/>
    </cofactor>
</comment>
<comment type="subcellular location">
    <subcellularLocation>
        <location evidence="4">Membrane</location>
        <topology evidence="4">Single-pass membrane protein</topology>
    </subcellularLocation>
</comment>
<comment type="alternative products">
    <event type="alternative splicing"/>
    <isoform>
        <id>Q8L7D5-2</id>
        <name>2</name>
        <sequence type="displayed"/>
    </isoform>
    <isoform>
        <id>Q8L7D5-1</id>
        <name>1</name>
        <sequence type="described" ref="VSP_038052"/>
    </isoform>
</comment>
<comment type="tissue specificity">
    <text evidence="3">Expressed primarily in the root epidermis.</text>
</comment>
<comment type="disruption phenotype">
    <text evidence="3">Increased levels of thalianol in roots.</text>
</comment>
<comment type="miscellaneous">
    <text>Constitutes with three contiguous genes an operon-like gene cluster that is involved in the thalianol pathway.</text>
</comment>
<comment type="similarity">
    <text evidence="4">Belongs to the cytochrome P450 family.</text>
</comment>
<sequence>MSFVWSAAVWVIAVAAVVISKWLYRWSNPKCNGKLPPGSMGLPIIGETCDFFEPHGLYEISPFVKKRMLKYGPLFRTNIFGSNTVVLTEPDIIFEVFRQENKSFVFSYPEAFVKPFGKENVFLKHGNIHKHVKQISLQHLGSEALKKKMIGEIDRVTYEHLRSKANQGSFDAKEAVESVIMAHLTPKIISNLKPETQATLVDNIMALGSEWFQSPLKLTTLISIYKVFIARRYALQVIKDVFTRRKASREMCGDFLDTMVEEGEKEDVIFNEESAINLIFAILVVAKESTSSVTSLAIKFLAENHKALAELKREHAAILQNRNGKGAGVSWEEYRHQMTFTNMVINETLRMANMAPIMYRKAVNDVEIKGYTIPAGWIVAVIPPAVHFNDAIYENPLEFNPWRWEGKELRSGSKTFMVFGGGVRQCVGAEFARLQISIFIHHLVTTYDFSLAQESEFIRAPLPYFPKGLPIKISQSL</sequence>
<reference key="1">
    <citation type="journal article" date="1999" name="DNA Res.">
        <title>Structural analysis of Arabidopsis thaliana chromosome 5. IX. Sequence features of the regions of 1,011,550 bp covered by seventeen P1 and TAC clones.</title>
        <authorList>
            <person name="Kaneko T."/>
            <person name="Katoh T."/>
            <person name="Sato S."/>
            <person name="Nakamura Y."/>
            <person name="Asamizu E."/>
            <person name="Kotani H."/>
            <person name="Miyajima N."/>
            <person name="Tabata S."/>
        </authorList>
    </citation>
    <scope>NUCLEOTIDE SEQUENCE [LARGE SCALE GENOMIC DNA]</scope>
    <source>
        <strain>cv. Columbia</strain>
    </source>
</reference>
<reference key="2">
    <citation type="journal article" date="2017" name="Plant J.">
        <title>Araport11: a complete reannotation of the Arabidopsis thaliana reference genome.</title>
        <authorList>
            <person name="Cheng C.Y."/>
            <person name="Krishnakumar V."/>
            <person name="Chan A.P."/>
            <person name="Thibaud-Nissen F."/>
            <person name="Schobel S."/>
            <person name="Town C.D."/>
        </authorList>
    </citation>
    <scope>GENOME REANNOTATION</scope>
    <source>
        <strain>cv. Columbia</strain>
    </source>
</reference>
<reference key="3">
    <citation type="journal article" date="2003" name="Science">
        <title>Empirical analysis of transcriptional activity in the Arabidopsis genome.</title>
        <authorList>
            <person name="Yamada K."/>
            <person name="Lim J."/>
            <person name="Dale J.M."/>
            <person name="Chen H."/>
            <person name="Shinn P."/>
            <person name="Palm C.J."/>
            <person name="Southwick A.M."/>
            <person name="Wu H.C."/>
            <person name="Kim C.J."/>
            <person name="Nguyen M."/>
            <person name="Pham P.K."/>
            <person name="Cheuk R.F."/>
            <person name="Karlin-Newmann G."/>
            <person name="Liu S.X."/>
            <person name="Lam B."/>
            <person name="Sakano H."/>
            <person name="Wu T."/>
            <person name="Yu G."/>
            <person name="Miranda M."/>
            <person name="Quach H.L."/>
            <person name="Tripp M."/>
            <person name="Chang C.H."/>
            <person name="Lee J.M."/>
            <person name="Toriumi M.J."/>
            <person name="Chan M.M."/>
            <person name="Tang C.C."/>
            <person name="Onodera C.S."/>
            <person name="Deng J.M."/>
            <person name="Akiyama K."/>
            <person name="Ansari Y."/>
            <person name="Arakawa T."/>
            <person name="Banh J."/>
            <person name="Banno F."/>
            <person name="Bowser L."/>
            <person name="Brooks S.Y."/>
            <person name="Carninci P."/>
            <person name="Chao Q."/>
            <person name="Choy N."/>
            <person name="Enju A."/>
            <person name="Goldsmith A.D."/>
            <person name="Gurjal M."/>
            <person name="Hansen N.F."/>
            <person name="Hayashizaki Y."/>
            <person name="Johnson-Hopson C."/>
            <person name="Hsuan V.W."/>
            <person name="Iida K."/>
            <person name="Karnes M."/>
            <person name="Khan S."/>
            <person name="Koesema E."/>
            <person name="Ishida J."/>
            <person name="Jiang P.X."/>
            <person name="Jones T."/>
            <person name="Kawai J."/>
            <person name="Kamiya A."/>
            <person name="Meyers C."/>
            <person name="Nakajima M."/>
            <person name="Narusaka M."/>
            <person name="Seki M."/>
            <person name="Sakurai T."/>
            <person name="Satou M."/>
            <person name="Tamse R."/>
            <person name="Vaysberg M."/>
            <person name="Wallender E.K."/>
            <person name="Wong C."/>
            <person name="Yamamura Y."/>
            <person name="Yuan S."/>
            <person name="Shinozaki K."/>
            <person name="Davis R.W."/>
            <person name="Theologis A."/>
            <person name="Ecker J.R."/>
        </authorList>
    </citation>
    <scope>NUCLEOTIDE SEQUENCE [LARGE SCALE MRNA] (ISOFORM 2)</scope>
    <source>
        <strain>cv. Columbia</strain>
    </source>
</reference>
<reference key="4">
    <citation type="journal article" date="2009" name="DNA Res.">
        <title>Analysis of multiple occurrences of alternative splicing events in Arabidopsis thaliana using novel sequenced full-length cDNAs.</title>
        <authorList>
            <person name="Iida K."/>
            <person name="Fukami-Kobayashi K."/>
            <person name="Toyoda A."/>
            <person name="Sakaki Y."/>
            <person name="Kobayashi M."/>
            <person name="Seki M."/>
            <person name="Shinozaki K."/>
        </authorList>
    </citation>
    <scope>NUCLEOTIDE SEQUENCE [LARGE SCALE MRNA] (ISOFORM 2)</scope>
    <source>
        <strain>cv. Columbia</strain>
    </source>
</reference>
<reference key="5">
    <citation type="journal article" date="2008" name="Science">
        <title>Metabolic diversification -- independent assembly of operon-like gene clusters in different plants.</title>
        <authorList>
            <person name="Field B."/>
            <person name="Osbourn A.E."/>
        </authorList>
    </citation>
    <scope>FUNCTION</scope>
    <scope>TISSUE SPECIFICITY</scope>
    <scope>DISRUPTION PHENOTYPE</scope>
</reference>
<feature type="chain" id="PRO_0000366941" description="Cytochrome P450 708A2">
    <location>
        <begin position="1"/>
        <end position="477"/>
    </location>
</feature>
<feature type="transmembrane region" description="Helical" evidence="2">
    <location>
        <begin position="3"/>
        <end position="23"/>
    </location>
</feature>
<feature type="binding site" description="axial binding residue" evidence="1">
    <location>
        <position position="426"/>
    </location>
    <ligand>
        <name>heme</name>
        <dbReference type="ChEBI" id="CHEBI:30413"/>
    </ligand>
    <ligandPart>
        <name>Fe</name>
        <dbReference type="ChEBI" id="CHEBI:18248"/>
    </ligandPart>
</feature>
<feature type="splice variant" id="VSP_038052" description="In isoform 1." evidence="4">
    <original>M</original>
    <variation>MDRRGKYWAGPMWIGLSMCGSGSDTILECRLRLFKLQRQNQ</variation>
    <location>
        <position position="1"/>
    </location>
</feature>
<feature type="sequence conflict" description="In Ref. 4; BAH20010." evidence="4" ref="4">
    <original>E</original>
    <variation>G</variation>
    <location>
        <position position="152"/>
    </location>
</feature>
<feature type="sequence conflict" description="In Ref. 3; AAN15443/AAM96995." evidence="4" ref="3">
    <original>E</original>
    <variation>D</variation>
    <location>
        <position position="273"/>
    </location>
</feature>
<organism>
    <name type="scientific">Arabidopsis thaliana</name>
    <name type="common">Mouse-ear cress</name>
    <dbReference type="NCBI Taxonomy" id="3702"/>
    <lineage>
        <taxon>Eukaryota</taxon>
        <taxon>Viridiplantae</taxon>
        <taxon>Streptophyta</taxon>
        <taxon>Embryophyta</taxon>
        <taxon>Tracheophyta</taxon>
        <taxon>Spermatophyta</taxon>
        <taxon>Magnoliopsida</taxon>
        <taxon>eudicotyledons</taxon>
        <taxon>Gunneridae</taxon>
        <taxon>Pentapetalae</taxon>
        <taxon>rosids</taxon>
        <taxon>malvids</taxon>
        <taxon>Brassicales</taxon>
        <taxon>Brassicaceae</taxon>
        <taxon>Camelineae</taxon>
        <taxon>Arabidopsis</taxon>
    </lineage>
</organism>
<accession>Q8L7D5</accession>
<accession>B9DGZ3</accession>
<accession>Q3E8E7</accession>
<accession>Q3E8E8</accession>
<accession>Q9FI38</accession>
<dbReference type="EC" id="1.14.-.-"/>
<dbReference type="EMBL" id="AB017064">
    <property type="protein sequence ID" value="BAB11064.1"/>
    <property type="molecule type" value="Genomic_DNA"/>
</dbReference>
<dbReference type="EMBL" id="CP002688">
    <property type="protein sequence ID" value="AED95604.1"/>
    <property type="molecule type" value="Genomic_DNA"/>
</dbReference>
<dbReference type="EMBL" id="CP002688">
    <property type="protein sequence ID" value="AED95605.1"/>
    <property type="molecule type" value="Genomic_DNA"/>
</dbReference>
<dbReference type="EMBL" id="CP002688">
    <property type="protein sequence ID" value="AED95607.1"/>
    <property type="molecule type" value="Genomic_DNA"/>
</dbReference>
<dbReference type="EMBL" id="CP002688">
    <property type="protein sequence ID" value="AED95608.1"/>
    <property type="molecule type" value="Genomic_DNA"/>
</dbReference>
<dbReference type="EMBL" id="CP002688">
    <property type="protein sequence ID" value="ANM68581.1"/>
    <property type="molecule type" value="Genomic_DNA"/>
</dbReference>
<dbReference type="EMBL" id="CP002688">
    <property type="protein sequence ID" value="ANM68582.1"/>
    <property type="molecule type" value="Genomic_DNA"/>
</dbReference>
<dbReference type="EMBL" id="AY136329">
    <property type="protein sequence ID" value="AAM96995.1"/>
    <property type="molecule type" value="mRNA"/>
</dbReference>
<dbReference type="EMBL" id="BT000124">
    <property type="protein sequence ID" value="AAN15443.1"/>
    <property type="molecule type" value="mRNA"/>
</dbReference>
<dbReference type="EMBL" id="AK317336">
    <property type="protein sequence ID" value="BAH20010.1"/>
    <property type="molecule type" value="mRNA"/>
</dbReference>
<dbReference type="RefSeq" id="NP_001032030.1">
    <molecule id="Q8L7D5-2"/>
    <property type="nucleotide sequence ID" value="NM_001036953.1"/>
</dbReference>
<dbReference type="RefSeq" id="NP_001078732.1">
    <molecule id="Q8L7D5-2"/>
    <property type="nucleotide sequence ID" value="NM_001085263.2"/>
</dbReference>
<dbReference type="RefSeq" id="NP_001318756.1">
    <molecule id="Q8L7D5-2"/>
    <property type="nucleotide sequence ID" value="NM_001344755.1"/>
</dbReference>
<dbReference type="RefSeq" id="NP_001330320.1">
    <molecule id="Q8L7D5-2"/>
    <property type="nucleotide sequence ID" value="NM_001344756.1"/>
</dbReference>
<dbReference type="RefSeq" id="NP_199611.2">
    <molecule id="Q8L7D5-2"/>
    <property type="nucleotide sequence ID" value="NM_124174.3"/>
</dbReference>
<dbReference type="RefSeq" id="NP_851152.1">
    <property type="nucleotide sequence ID" value="NM_180821.3"/>
</dbReference>
<dbReference type="RefSeq" id="NP_851153.1">
    <molecule id="Q8L7D5-2"/>
    <property type="nucleotide sequence ID" value="NM_180822.2"/>
</dbReference>
<dbReference type="SMR" id="Q8L7D5"/>
<dbReference type="BioGRID" id="20099">
    <property type="interactions" value="1"/>
</dbReference>
<dbReference type="FunCoup" id="Q8L7D5">
    <property type="interactions" value="137"/>
</dbReference>
<dbReference type="STRING" id="3702.Q8L7D5"/>
<dbReference type="PaxDb" id="3702-AT5G48000.1"/>
<dbReference type="ProteomicsDB" id="234231">
    <molecule id="Q8L7D5-2"/>
</dbReference>
<dbReference type="EnsemblPlants" id="AT5G48000.2">
    <molecule id="Q8L7D5-2"/>
    <property type="protein sequence ID" value="AT5G48000.2"/>
    <property type="gene ID" value="AT5G48000"/>
</dbReference>
<dbReference type="EnsemblPlants" id="AT5G48000.3">
    <molecule id="Q8L7D5-2"/>
    <property type="protein sequence ID" value="AT5G48000.3"/>
    <property type="gene ID" value="AT5G48000"/>
</dbReference>
<dbReference type="EnsemblPlants" id="AT5G48000.4">
    <molecule id="Q8L7D5-2"/>
    <property type="protein sequence ID" value="AT5G48000.4"/>
    <property type="gene ID" value="AT5G48000"/>
</dbReference>
<dbReference type="EnsemblPlants" id="AT5G48000.5">
    <molecule id="Q8L7D5-2"/>
    <property type="protein sequence ID" value="AT5G48000.5"/>
    <property type="gene ID" value="AT5G48000"/>
</dbReference>
<dbReference type="EnsemblPlants" id="AT5G48000.6">
    <molecule id="Q8L7D5-2"/>
    <property type="protein sequence ID" value="AT5G48000.6"/>
    <property type="gene ID" value="AT5G48000"/>
</dbReference>
<dbReference type="EnsemblPlants" id="AT5G48000.7">
    <molecule id="Q8L7D5-2"/>
    <property type="protein sequence ID" value="AT5G48000.7"/>
    <property type="gene ID" value="AT5G48000"/>
</dbReference>
<dbReference type="GeneID" id="834851"/>
<dbReference type="Gramene" id="AT5G48000.2">
    <molecule id="Q8L7D5-2"/>
    <property type="protein sequence ID" value="AT5G48000.2"/>
    <property type="gene ID" value="AT5G48000"/>
</dbReference>
<dbReference type="Gramene" id="AT5G48000.3">
    <molecule id="Q8L7D5-2"/>
    <property type="protein sequence ID" value="AT5G48000.3"/>
    <property type="gene ID" value="AT5G48000"/>
</dbReference>
<dbReference type="Gramene" id="AT5G48000.4">
    <molecule id="Q8L7D5-2"/>
    <property type="protein sequence ID" value="AT5G48000.4"/>
    <property type="gene ID" value="AT5G48000"/>
</dbReference>
<dbReference type="Gramene" id="AT5G48000.5">
    <molecule id="Q8L7D5-2"/>
    <property type="protein sequence ID" value="AT5G48000.5"/>
    <property type="gene ID" value="AT5G48000"/>
</dbReference>
<dbReference type="Gramene" id="AT5G48000.6">
    <molecule id="Q8L7D5-2"/>
    <property type="protein sequence ID" value="AT5G48000.6"/>
    <property type="gene ID" value="AT5G48000"/>
</dbReference>
<dbReference type="Gramene" id="AT5G48000.7">
    <molecule id="Q8L7D5-2"/>
    <property type="protein sequence ID" value="AT5G48000.7"/>
    <property type="gene ID" value="AT5G48000"/>
</dbReference>
<dbReference type="KEGG" id="ath:AT5G48000"/>
<dbReference type="Araport" id="AT5G48000"/>
<dbReference type="TAIR" id="AT5G48000">
    <property type="gene designation" value="CYP708A2"/>
</dbReference>
<dbReference type="eggNOG" id="KOG0157">
    <property type="taxonomic scope" value="Eukaryota"/>
</dbReference>
<dbReference type="HOGENOM" id="CLU_001570_15_5_1"/>
<dbReference type="InParanoid" id="Q8L7D5"/>
<dbReference type="OMA" id="WIRSPFA"/>
<dbReference type="PhylomeDB" id="Q8L7D5"/>
<dbReference type="BioCyc" id="MetaCyc:AT5G48000-MONOMER"/>
<dbReference type="PRO" id="PR:Q8L7D5"/>
<dbReference type="Proteomes" id="UP000006548">
    <property type="component" value="Chromosome 5"/>
</dbReference>
<dbReference type="ExpressionAtlas" id="Q8L7D5">
    <property type="expression patterns" value="baseline and differential"/>
</dbReference>
<dbReference type="GO" id="GO:0016020">
    <property type="term" value="C:membrane"/>
    <property type="evidence" value="ECO:0007669"/>
    <property type="project" value="UniProtKB-SubCell"/>
</dbReference>
<dbReference type="GO" id="GO:0020037">
    <property type="term" value="F:heme binding"/>
    <property type="evidence" value="ECO:0007669"/>
    <property type="project" value="InterPro"/>
</dbReference>
<dbReference type="GO" id="GO:0005506">
    <property type="term" value="F:iron ion binding"/>
    <property type="evidence" value="ECO:0007669"/>
    <property type="project" value="InterPro"/>
</dbReference>
<dbReference type="GO" id="GO:0004497">
    <property type="term" value="F:monooxygenase activity"/>
    <property type="evidence" value="ECO:0007669"/>
    <property type="project" value="UniProtKB-KW"/>
</dbReference>
<dbReference type="GO" id="GO:0016705">
    <property type="term" value="F:oxidoreductase activity, acting on paired donors, with incorporation or reduction of molecular oxygen"/>
    <property type="evidence" value="ECO:0007669"/>
    <property type="project" value="InterPro"/>
</dbReference>
<dbReference type="CDD" id="cd11043">
    <property type="entry name" value="CYP90-like"/>
    <property type="match status" value="1"/>
</dbReference>
<dbReference type="FunFam" id="1.10.630.10:FF:000020">
    <property type="entry name" value="Cytochrome P450 family protein"/>
    <property type="match status" value="1"/>
</dbReference>
<dbReference type="Gene3D" id="1.10.630.10">
    <property type="entry name" value="Cytochrome P450"/>
    <property type="match status" value="1"/>
</dbReference>
<dbReference type="InterPro" id="IPR001128">
    <property type="entry name" value="Cyt_P450"/>
</dbReference>
<dbReference type="InterPro" id="IPR017972">
    <property type="entry name" value="Cyt_P450_CS"/>
</dbReference>
<dbReference type="InterPro" id="IPR002403">
    <property type="entry name" value="Cyt_P450_E_grp-IV"/>
</dbReference>
<dbReference type="InterPro" id="IPR036396">
    <property type="entry name" value="Cyt_P450_sf"/>
</dbReference>
<dbReference type="PANTHER" id="PTHR24286">
    <property type="entry name" value="CYTOCHROME P450 26"/>
    <property type="match status" value="1"/>
</dbReference>
<dbReference type="PANTHER" id="PTHR24286:SF305">
    <property type="entry name" value="CYTOCHROME P450 708A2"/>
    <property type="match status" value="1"/>
</dbReference>
<dbReference type="Pfam" id="PF00067">
    <property type="entry name" value="p450"/>
    <property type="match status" value="1"/>
</dbReference>
<dbReference type="PRINTS" id="PR00465">
    <property type="entry name" value="EP450IV"/>
</dbReference>
<dbReference type="PRINTS" id="PR00385">
    <property type="entry name" value="P450"/>
</dbReference>
<dbReference type="SUPFAM" id="SSF48264">
    <property type="entry name" value="Cytochrome P450"/>
    <property type="match status" value="1"/>
</dbReference>
<dbReference type="PROSITE" id="PS00086">
    <property type="entry name" value="CYTOCHROME_P450"/>
    <property type="match status" value="1"/>
</dbReference>
<name>THAH_ARATH</name>
<keyword id="KW-0025">Alternative splicing</keyword>
<keyword id="KW-0349">Heme</keyword>
<keyword id="KW-0408">Iron</keyword>
<keyword id="KW-0472">Membrane</keyword>
<keyword id="KW-0479">Metal-binding</keyword>
<keyword id="KW-0503">Monooxygenase</keyword>
<keyword id="KW-0560">Oxidoreductase</keyword>
<keyword id="KW-1185">Reference proteome</keyword>
<keyword id="KW-0812">Transmembrane</keyword>
<keyword id="KW-1133">Transmembrane helix</keyword>
<evidence type="ECO:0000250" key="1"/>
<evidence type="ECO:0000255" key="2"/>
<evidence type="ECO:0000269" key="3">
    <source>
    </source>
</evidence>
<evidence type="ECO:0000305" key="4"/>
<proteinExistence type="evidence at transcript level"/>
<protein>
    <recommendedName>
        <fullName>Cytochrome P450 708A2</fullName>
        <ecNumber>1.14.-.-</ecNumber>
    </recommendedName>
    <alternativeName>
        <fullName>Thalianol hydroxylase</fullName>
        <shortName>AtTHAH</shortName>
    </alternativeName>
</protein>